<dbReference type="EMBL" id="AF071411">
    <property type="protein sequence ID" value="AAD43626.1"/>
    <property type="molecule type" value="Genomic_DNA"/>
</dbReference>
<dbReference type="EMBL" id="AF173826">
    <property type="protein sequence ID" value="AAF29805.1"/>
    <property type="molecule type" value="Genomic_DNA"/>
</dbReference>
<dbReference type="SMR" id="Q9Y8G1"/>
<dbReference type="GlyCosmos" id="Q9Y8G1">
    <property type="glycosylation" value="5 sites, No reported glycans"/>
</dbReference>
<dbReference type="GO" id="GO:0005743">
    <property type="term" value="C:mitochondrial inner membrane"/>
    <property type="evidence" value="ECO:0007669"/>
    <property type="project" value="TreeGrafter"/>
</dbReference>
<dbReference type="GO" id="GO:0005886">
    <property type="term" value="C:plasma membrane"/>
    <property type="evidence" value="ECO:0007669"/>
    <property type="project" value="UniProtKB-SubCell"/>
</dbReference>
<dbReference type="GO" id="GO:0015421">
    <property type="term" value="F:ABC-type oligopeptide transporter activity"/>
    <property type="evidence" value="ECO:0007669"/>
    <property type="project" value="TreeGrafter"/>
</dbReference>
<dbReference type="GO" id="GO:0005524">
    <property type="term" value="F:ATP binding"/>
    <property type="evidence" value="ECO:0007669"/>
    <property type="project" value="UniProtKB-KW"/>
</dbReference>
<dbReference type="GO" id="GO:0016887">
    <property type="term" value="F:ATP hydrolysis activity"/>
    <property type="evidence" value="ECO:0007669"/>
    <property type="project" value="InterPro"/>
</dbReference>
<dbReference type="GO" id="GO:0090374">
    <property type="term" value="P:oligopeptide export from mitochondrion"/>
    <property type="evidence" value="ECO:0007669"/>
    <property type="project" value="TreeGrafter"/>
</dbReference>
<dbReference type="CDD" id="cd18577">
    <property type="entry name" value="ABC_6TM_Pgp_ABCB1_D1_like"/>
    <property type="match status" value="1"/>
</dbReference>
<dbReference type="CDD" id="cd18578">
    <property type="entry name" value="ABC_6TM_Pgp_ABCB1_D2_like"/>
    <property type="match status" value="1"/>
</dbReference>
<dbReference type="CDD" id="cd03249">
    <property type="entry name" value="ABC_MTABC3_MDL1_MDL2"/>
    <property type="match status" value="2"/>
</dbReference>
<dbReference type="FunFam" id="1.20.1560.10:FF:000102">
    <property type="entry name" value="ABC multidrug transporter Mdr1"/>
    <property type="match status" value="1"/>
</dbReference>
<dbReference type="FunFam" id="1.20.1560.10:FF:000009">
    <property type="entry name" value="ABC transporter B family member 1"/>
    <property type="match status" value="1"/>
</dbReference>
<dbReference type="FunFam" id="3.40.50.300:FF:000251">
    <property type="entry name" value="ABC transporter B family member 19"/>
    <property type="match status" value="1"/>
</dbReference>
<dbReference type="FunFam" id="3.40.50.300:FF:000302">
    <property type="entry name" value="ATP-binding cassette subfamily B member 5"/>
    <property type="match status" value="1"/>
</dbReference>
<dbReference type="Gene3D" id="1.20.1560.10">
    <property type="entry name" value="ABC transporter type 1, transmembrane domain"/>
    <property type="match status" value="1"/>
</dbReference>
<dbReference type="Gene3D" id="3.40.50.300">
    <property type="entry name" value="P-loop containing nucleotide triphosphate hydrolases"/>
    <property type="match status" value="2"/>
</dbReference>
<dbReference type="InterPro" id="IPR003593">
    <property type="entry name" value="AAA+_ATPase"/>
</dbReference>
<dbReference type="InterPro" id="IPR011527">
    <property type="entry name" value="ABC1_TM_dom"/>
</dbReference>
<dbReference type="InterPro" id="IPR036640">
    <property type="entry name" value="ABC1_TM_sf"/>
</dbReference>
<dbReference type="InterPro" id="IPR003439">
    <property type="entry name" value="ABC_transporter-like_ATP-bd"/>
</dbReference>
<dbReference type="InterPro" id="IPR017871">
    <property type="entry name" value="ABC_transporter-like_CS"/>
</dbReference>
<dbReference type="InterPro" id="IPR027417">
    <property type="entry name" value="P-loop_NTPase"/>
</dbReference>
<dbReference type="InterPro" id="IPR039421">
    <property type="entry name" value="Type_1_exporter"/>
</dbReference>
<dbReference type="PANTHER" id="PTHR43394">
    <property type="entry name" value="ATP-DEPENDENT PERMEASE MDL1, MITOCHONDRIAL"/>
    <property type="match status" value="1"/>
</dbReference>
<dbReference type="PANTHER" id="PTHR43394:SF27">
    <property type="entry name" value="ATP-DEPENDENT TRANSLOCASE ABCB1-LIKE"/>
    <property type="match status" value="1"/>
</dbReference>
<dbReference type="Pfam" id="PF00664">
    <property type="entry name" value="ABC_membrane"/>
    <property type="match status" value="2"/>
</dbReference>
<dbReference type="Pfam" id="PF00005">
    <property type="entry name" value="ABC_tran"/>
    <property type="match status" value="2"/>
</dbReference>
<dbReference type="SMART" id="SM00382">
    <property type="entry name" value="AAA"/>
    <property type="match status" value="2"/>
</dbReference>
<dbReference type="SUPFAM" id="SSF90123">
    <property type="entry name" value="ABC transporter transmembrane region"/>
    <property type="match status" value="2"/>
</dbReference>
<dbReference type="SUPFAM" id="SSF52540">
    <property type="entry name" value="P-loop containing nucleoside triphosphate hydrolases"/>
    <property type="match status" value="2"/>
</dbReference>
<dbReference type="PROSITE" id="PS50929">
    <property type="entry name" value="ABC_TM1F"/>
    <property type="match status" value="2"/>
</dbReference>
<dbReference type="PROSITE" id="PS00211">
    <property type="entry name" value="ABC_TRANSPORTER_1"/>
    <property type="match status" value="2"/>
</dbReference>
<dbReference type="PROSITE" id="PS50893">
    <property type="entry name" value="ABC_TRANSPORTER_2"/>
    <property type="match status" value="2"/>
</dbReference>
<name>ATRD_EMEND</name>
<comment type="function">
    <text evidence="6">Pleiotropic ABC efflux transporter involved in the protection of the cells against a wide range of toxic compounds (PubMed:10954082). Confers resistance to the azole fenarimol via efflux transport (PubMed:10954082). May also be involved in the secretion of penicillin (PubMed:10954082).</text>
</comment>
<comment type="activity regulation">
    <text evidence="6">Fenamirol efflux transporter activity is inhibited by the cyclosporin derivative PSC 833, nigericin, reserpine and valinomycin (PubMed:10954082). The effect of reserpine is transiant, while that of the cyclosporin derivative PSC 833, nigericin and valinomycin is proportional to the time of exposure (PubMed:10954082). Cyclohexinmide has inhibitory effect only when applied prior to addition of the fungicide (PubMed:10954082).</text>
</comment>
<comment type="subcellular location">
    <subcellularLocation>
        <location evidence="9">Cell membrane</location>
        <topology evidence="1">Multi-pass membrane protein</topology>
    </subcellularLocation>
</comment>
<comment type="induction">
    <text evidence="6 7">Expression is strongly increased in the presence of cycloheximide, camptothecin, imazalil, itraconazole, hygromycin and 4-nitroquinoline oxide (4-NQO).</text>
</comment>
<comment type="disruption phenotype">
    <text evidence="6">Leads to the cellular accumulation of fenarimol (PubMed:10954082). Leads to increased susceptibility to cycloheximide, the cyclosporin derivative PSC 833, nigericin and valinomycin (PubMed:10954082).</text>
</comment>
<comment type="similarity">
    <text evidence="9">Belongs to the ABC transporter superfamily. ABCB family. Multidrug resistance exporter (TC 3.A.1.201) subfamily.</text>
</comment>
<evidence type="ECO:0000255" key="1"/>
<evidence type="ECO:0000255" key="2">
    <source>
        <dbReference type="PROSITE-ProRule" id="PRU00434"/>
    </source>
</evidence>
<evidence type="ECO:0000255" key="3">
    <source>
        <dbReference type="PROSITE-ProRule" id="PRU00441"/>
    </source>
</evidence>
<evidence type="ECO:0000255" key="4">
    <source>
        <dbReference type="PROSITE-ProRule" id="PRU00498"/>
    </source>
</evidence>
<evidence type="ECO:0000256" key="5">
    <source>
        <dbReference type="SAM" id="MobiDB-lite"/>
    </source>
</evidence>
<evidence type="ECO:0000269" key="6">
    <source>
    </source>
</evidence>
<evidence type="ECO:0000269" key="7">
    <source>
    </source>
</evidence>
<evidence type="ECO:0000303" key="8">
    <source>
    </source>
</evidence>
<evidence type="ECO:0000305" key="9"/>
<proteinExistence type="evidence at protein level"/>
<accession>Q9Y8G1</accession>
<gene>
    <name evidence="8" type="primary">atrD</name>
    <name type="synonym">abcD</name>
</gene>
<protein>
    <recommendedName>
        <fullName>ABC multidrug transporter atrD</fullName>
    </recommendedName>
</protein>
<sequence>MSPLETNPLSPETAMREPAETSTTEEQASTPHAADEKKILSDLSAPSSTTATPADKEHRPKSSSSNNAVSVNEVDALIAHLPEDERQVLKTQLEEIKVNISFFGLWRYATKMDILIMVISTICAIAAGAALPLFTILFGSLASTFQRIMLYQISYDEFYDELTKNVLYFVYLGIGEFVTVYVSTVGFIYTGEHATQKIREYYLESILRQNIGYFDKLGAGEVTTRITADTNLIQDGISEKVGLTLTALATFVTAFIIAYVKYWKLALICSSTIVALVLTMGGGSQFIIKYSKKSLDSYGAGGTVAEEVISSIRNATAFGTQDKLAKQYEVHLDEAEKWGTKNQIVMGFMIGAMFGLMYSNYGLGFWMGSRFLVDGAVDVGDILTVLMAILIGSFSLGNVSPNAQAFTNAVAAAAKIFGTIDRQSPLDPYSNEGKTLDHFEGHIELRNVKHIYPSRPEVTVMEDVSLSMPAGKTTALVGPSGSGKSTVVGLVERFYMPVRGTVLLDGHDIKDLNLRWLRQQISLVSQEPVLFGTTIYKNIRHGLIGTKYENESEDKVRELIENAAKMANAHDFITALPEGYETNVGQRGFLLSGGQKQRIAIARAVVSDPKILLLDEATSALDTKSEGVVQAALERAAEGRTTIVIAHRLSTIKTAHNIVVLVNGKIAEQGTHDELVDRGGAYRKLVEAQRINEQKEADALEDADAEDLTNADIAKIKTASSASSDLDGKPTTIDRTGTHKSVSSAILSKRPPETTPKYSLWTLLKFVASFNRPEIPYMLIGLVFSVLAGGGQPTQAVLYAKAISTLSLPESQYSKLRHDADFWSLMFFVVGIIQFITQSTNGAAFAVCSERLIRRARSTAFRTILRQDIAFFDKEENSTGALTSFLSTETKHLSGVSGVTLGTILMTSTTLGAAIIIALAIGWKLALVCISVVPVLLACGFYRFYMLAQFQSRSKLAYEGSANFACEATSSIRTVASLTRERDVWEIYHAQLDAQGRTSLISVLRSSLLYASSQALVFFCVALGFWYGGTLLGHHEYDIFRFFVCFSEILFGAQSAGTVFSFAPDMGKAKNAAAEFRRLFDRKPQIDNWSEEGEKLETVEGEIEFRNVHFRYPTRPEQPVLRGLDLTVKPGQYVALVGPSGCGKSTTIALLERFYDAIAGSILVDGKDISKLNINSYRSFLSLVSQEPTLYQGTIKENILLGIVEDDVPEEFLIKACKDANIYDFIMSLPEGFNTVVGSKGGMLSGGQKQRVAIARALLRDPKILLLDEATSALDSESEKVVQAALDAAARGRTTIAVAHRLSTIQKADVIYVFDQGKIVESGTHSELVQKKGRYYELVNLQSLGKGH</sequence>
<organism>
    <name type="scientific">Emericella nidulans</name>
    <name type="common">Aspergillus nidulans</name>
    <dbReference type="NCBI Taxonomy" id="162425"/>
    <lineage>
        <taxon>Eukaryota</taxon>
        <taxon>Fungi</taxon>
        <taxon>Dikarya</taxon>
        <taxon>Ascomycota</taxon>
        <taxon>Pezizomycotina</taxon>
        <taxon>Eurotiomycetes</taxon>
        <taxon>Eurotiomycetidae</taxon>
        <taxon>Eurotiales</taxon>
        <taxon>Aspergillaceae</taxon>
        <taxon>Aspergillus</taxon>
        <taxon>Aspergillus subgen. Nidulantes</taxon>
    </lineage>
</organism>
<keyword id="KW-0067">ATP-binding</keyword>
<keyword id="KW-1003">Cell membrane</keyword>
<keyword id="KW-0325">Glycoprotein</keyword>
<keyword id="KW-0472">Membrane</keyword>
<keyword id="KW-0547">Nucleotide-binding</keyword>
<keyword id="KW-0677">Repeat</keyword>
<keyword id="KW-0812">Transmembrane</keyword>
<keyword id="KW-1133">Transmembrane helix</keyword>
<keyword id="KW-0813">Transport</keyword>
<reference key="1">
    <citation type="submission" date="1999-07" db="EMBL/GenBank/DDBJ databases">
        <title>Molecular characterization of ABC-transporter encoding genes in Aspergillus nidulans.</title>
        <authorList>
            <person name="Nascimento A.M."/>
            <person name="Terenzi M.F."/>
            <person name="Goldman M.H.S."/>
            <person name="Goldman G.H."/>
        </authorList>
    </citation>
    <scope>NUCLEOTIDE SEQUENCE [GENOMIC DNA]</scope>
</reference>
<reference key="2">
    <citation type="journal article" date="2000" name="Mol. Gen. Genet.">
        <title>The role of ABC transporters from Aspergillus nidulans in protection against cytotoxic agents and in antibiotic production.</title>
        <authorList>
            <person name="Andrade A.C."/>
            <person name="Van Nistelrooy J.G."/>
            <person name="Peery R.B."/>
            <person name="Skatrud P.L."/>
            <person name="De Waard M.A."/>
        </authorList>
    </citation>
    <scope>NUCLEOTIDE SEQUENCE [GENOMIC DNA]</scope>
    <scope>FUNCTION</scope>
    <scope>INDUCTION</scope>
    <scope>DISRUPTION PHENOTYPE</scope>
    <scope>CATALYTIC ACTIVITY</scope>
    <scope>ACTIVITY REGULATION</scope>
    <source>
        <strain>W6-096</strain>
    </source>
</reference>
<reference key="3">
    <citation type="journal article" date="2002" name="Appl. Environ. Microbiol.">
        <title>Quantitative analysis of the relative transcript levels of ABC transporter Atr genes in Aspergillus nidulans by real-time reverse transcription-PCR assay.</title>
        <authorList>
            <person name="Semighini C.P."/>
            <person name="Marins M."/>
            <person name="Goldman M.H."/>
            <person name="Goldman G.H."/>
        </authorList>
    </citation>
    <scope>INDUCTION</scope>
</reference>
<feature type="chain" id="PRO_0000449467" description="ABC multidrug transporter atrD">
    <location>
        <begin position="1"/>
        <end position="1348"/>
    </location>
</feature>
<feature type="transmembrane region" description="Helical" evidence="1 3">
    <location>
        <begin position="114"/>
        <end position="134"/>
    </location>
</feature>
<feature type="transmembrane region" description="Helical" evidence="1 3">
    <location>
        <begin position="168"/>
        <end position="188"/>
    </location>
</feature>
<feature type="transmembrane region" description="Helical" evidence="1 3">
    <location>
        <begin position="240"/>
        <end position="260"/>
    </location>
</feature>
<feature type="transmembrane region" description="Helical" evidence="1 3">
    <location>
        <begin position="268"/>
        <end position="288"/>
    </location>
</feature>
<feature type="transmembrane region" description="Helical" evidence="1 3">
    <location>
        <begin position="344"/>
        <end position="364"/>
    </location>
</feature>
<feature type="transmembrane region" description="Helical" evidence="1 3">
    <location>
        <begin position="371"/>
        <end position="391"/>
    </location>
</feature>
<feature type="transmembrane region" description="Helical" evidence="1 3">
    <location>
        <begin position="778"/>
        <end position="798"/>
    </location>
</feature>
<feature type="transmembrane region" description="Helical" evidence="1 3">
    <location>
        <begin position="825"/>
        <end position="845"/>
    </location>
</feature>
<feature type="transmembrane region" description="Helical" evidence="1 3">
    <location>
        <begin position="892"/>
        <end position="912"/>
    </location>
</feature>
<feature type="transmembrane region" description="Helical" evidence="1 3">
    <location>
        <begin position="925"/>
        <end position="947"/>
    </location>
</feature>
<feature type="transmembrane region" description="Helical" evidence="1 3">
    <location>
        <begin position="1015"/>
        <end position="1035"/>
    </location>
</feature>
<feature type="transmembrane region" description="Helical" evidence="1 3">
    <location>
        <begin position="1042"/>
        <end position="1062"/>
    </location>
</feature>
<feature type="domain" description="ABC transmembrane type-1 1" evidence="3">
    <location>
        <begin position="118"/>
        <end position="408"/>
    </location>
</feature>
<feature type="domain" description="ABC transporter 1" evidence="2">
    <location>
        <begin position="443"/>
        <end position="688"/>
    </location>
</feature>
<feature type="domain" description="ABC transmembrane type-1 2" evidence="3">
    <location>
        <begin position="779"/>
        <end position="1068"/>
    </location>
</feature>
<feature type="domain" description="ABC transporter 2" evidence="2">
    <location>
        <begin position="1103"/>
        <end position="1341"/>
    </location>
</feature>
<feature type="region of interest" description="Disordered" evidence="5">
    <location>
        <begin position="1"/>
        <end position="67"/>
    </location>
</feature>
<feature type="compositionally biased region" description="Polar residues" evidence="5">
    <location>
        <begin position="1"/>
        <end position="10"/>
    </location>
</feature>
<feature type="compositionally biased region" description="Low complexity" evidence="5">
    <location>
        <begin position="20"/>
        <end position="31"/>
    </location>
</feature>
<feature type="binding site" evidence="2">
    <location>
        <begin position="478"/>
        <end position="485"/>
    </location>
    <ligand>
        <name>ATP</name>
        <dbReference type="ChEBI" id="CHEBI:30616"/>
    </ligand>
</feature>
<feature type="binding site" evidence="2">
    <location>
        <begin position="1138"/>
        <end position="1145"/>
    </location>
    <ligand>
        <name>ATP</name>
        <dbReference type="ChEBI" id="CHEBI:30616"/>
    </ligand>
</feature>
<feature type="glycosylation site" description="N-linked (GlcNAc...) asparagine" evidence="4">
    <location>
        <position position="99"/>
    </location>
</feature>
<feature type="glycosylation site" description="N-linked (GlcNAc...) asparagine" evidence="4">
    <location>
        <position position="314"/>
    </location>
</feature>
<feature type="glycosylation site" description="N-linked (GlcNAc...) asparagine" evidence="4">
    <location>
        <position position="550"/>
    </location>
</feature>
<feature type="glycosylation site" description="N-linked (GlcNAc...) asparagine" evidence="4">
    <location>
        <position position="877"/>
    </location>
</feature>
<feature type="glycosylation site" description="N-linked (GlcNAc...) asparagine" evidence="4">
    <location>
        <position position="1088"/>
    </location>
</feature>